<feature type="chain" id="PRO_0000278118" description="Serine/threonine-protein kinase PAK 6">
    <location>
        <begin position="1"/>
        <end position="681"/>
    </location>
</feature>
<feature type="domain" description="CRIB" evidence="2">
    <location>
        <begin position="12"/>
        <end position="25"/>
    </location>
</feature>
<feature type="domain" description="Protein kinase" evidence="3">
    <location>
        <begin position="407"/>
        <end position="658"/>
    </location>
</feature>
<feature type="region of interest" description="Disordered" evidence="4">
    <location>
        <begin position="1"/>
        <end position="30"/>
    </location>
</feature>
<feature type="region of interest" description="Linker" evidence="1">
    <location>
        <begin position="26"/>
        <end position="406"/>
    </location>
</feature>
<feature type="region of interest" description="Disordered" evidence="4">
    <location>
        <begin position="200"/>
        <end position="256"/>
    </location>
</feature>
<feature type="region of interest" description="Disordered" evidence="4">
    <location>
        <begin position="268"/>
        <end position="355"/>
    </location>
</feature>
<feature type="compositionally biased region" description="Low complexity" evidence="4">
    <location>
        <begin position="201"/>
        <end position="212"/>
    </location>
</feature>
<feature type="compositionally biased region" description="Low complexity" evidence="4">
    <location>
        <begin position="268"/>
        <end position="278"/>
    </location>
</feature>
<feature type="compositionally biased region" description="Polar residues" evidence="4">
    <location>
        <begin position="308"/>
        <end position="333"/>
    </location>
</feature>
<feature type="active site" description="Proton acceptor" evidence="3">
    <location>
        <position position="526"/>
    </location>
</feature>
<feature type="binding site" evidence="3">
    <location>
        <begin position="413"/>
        <end position="421"/>
    </location>
    <ligand>
        <name>ATP</name>
        <dbReference type="ChEBI" id="CHEBI:30616"/>
    </ligand>
</feature>
<feature type="binding site" evidence="3">
    <location>
        <position position="436"/>
    </location>
    <ligand>
        <name>ATP</name>
        <dbReference type="ChEBI" id="CHEBI:30616"/>
    </ligand>
</feature>
<feature type="modified residue" description="Phosphoserine; by autocatalysis" evidence="1">
    <location>
        <position position="560"/>
    </location>
</feature>
<comment type="function">
    <text evidence="1">Serine/threonine protein kinase that plays a role in the regulation of gene transcription. The kinase activity is induced by various effectors including AR or MAP2K6/MAPKK6. Phosphorylates the DNA-binding domain of androgen receptor/AR and thereby inhibits AR-mediated transcription. Also inhibits ESR1-mediated transcription. May play a role in cytoskeleton regulation by interacting with IQGAP1. May protect cells from apoptosis through phosphorylation of BAD (By similarity).</text>
</comment>
<comment type="catalytic activity">
    <reaction>
        <text>L-seryl-[protein] + ATP = O-phospho-L-seryl-[protein] + ADP + H(+)</text>
        <dbReference type="Rhea" id="RHEA:17989"/>
        <dbReference type="Rhea" id="RHEA-COMP:9863"/>
        <dbReference type="Rhea" id="RHEA-COMP:11604"/>
        <dbReference type="ChEBI" id="CHEBI:15378"/>
        <dbReference type="ChEBI" id="CHEBI:29999"/>
        <dbReference type="ChEBI" id="CHEBI:30616"/>
        <dbReference type="ChEBI" id="CHEBI:83421"/>
        <dbReference type="ChEBI" id="CHEBI:456216"/>
        <dbReference type="EC" id="2.7.11.1"/>
    </reaction>
</comment>
<comment type="catalytic activity">
    <reaction>
        <text>L-threonyl-[protein] + ATP = O-phospho-L-threonyl-[protein] + ADP + H(+)</text>
        <dbReference type="Rhea" id="RHEA:46608"/>
        <dbReference type="Rhea" id="RHEA-COMP:11060"/>
        <dbReference type="Rhea" id="RHEA-COMP:11605"/>
        <dbReference type="ChEBI" id="CHEBI:15378"/>
        <dbReference type="ChEBI" id="CHEBI:30013"/>
        <dbReference type="ChEBI" id="CHEBI:30616"/>
        <dbReference type="ChEBI" id="CHEBI:61977"/>
        <dbReference type="ChEBI" id="CHEBI:456216"/>
        <dbReference type="EC" id="2.7.11.1"/>
    </reaction>
</comment>
<comment type="subunit">
    <text evidence="1">Interacts tightly with GTP-bound but not GDP-bound CDC42/p21 and RAC1. Interacts with the androgen receptor AR. Interacts with IQGAP1 and PPM1B (By similarity).</text>
</comment>
<comment type="subcellular location">
    <subcellularLocation>
        <location evidence="1">Cytoplasm</location>
    </subcellularLocation>
    <subcellularLocation>
        <location evidence="1">Nucleus</location>
    </subcellularLocation>
    <text evidence="1">Cotranslocates into nucleus with AR in response to androgen induction.</text>
</comment>
<comment type="PTM">
    <text evidence="1">Autophosphorylated. Phosphorylated by MAP2K6/MAPKK6, leading to PAK6 activation (By similarity).</text>
</comment>
<comment type="similarity">
    <text evidence="5">Belongs to the protein kinase superfamily. STE Ser/Thr protein kinase family. STE20 subfamily.</text>
</comment>
<name>PAK6_PONAB</name>
<gene>
    <name type="primary">PAK6</name>
</gene>
<organism>
    <name type="scientific">Pongo abelii</name>
    <name type="common">Sumatran orangutan</name>
    <name type="synonym">Pongo pygmaeus abelii</name>
    <dbReference type="NCBI Taxonomy" id="9601"/>
    <lineage>
        <taxon>Eukaryota</taxon>
        <taxon>Metazoa</taxon>
        <taxon>Chordata</taxon>
        <taxon>Craniata</taxon>
        <taxon>Vertebrata</taxon>
        <taxon>Euteleostomi</taxon>
        <taxon>Mammalia</taxon>
        <taxon>Eutheria</taxon>
        <taxon>Euarchontoglires</taxon>
        <taxon>Primates</taxon>
        <taxon>Haplorrhini</taxon>
        <taxon>Catarrhini</taxon>
        <taxon>Hominidae</taxon>
        <taxon>Pongo</taxon>
    </lineage>
</organism>
<keyword id="KW-0067">ATP-binding</keyword>
<keyword id="KW-0963">Cytoplasm</keyword>
<keyword id="KW-0418">Kinase</keyword>
<keyword id="KW-0547">Nucleotide-binding</keyword>
<keyword id="KW-0539">Nucleus</keyword>
<keyword id="KW-0597">Phosphoprotein</keyword>
<keyword id="KW-1185">Reference proteome</keyword>
<keyword id="KW-0723">Serine/threonine-protein kinase</keyword>
<keyword id="KW-0808">Transferase</keyword>
<protein>
    <recommendedName>
        <fullName>Serine/threonine-protein kinase PAK 6</fullName>
        <ecNumber>2.7.11.1</ecNumber>
    </recommendedName>
    <alternativeName>
        <fullName>p21-activated kinase 6</fullName>
        <shortName>PAK-6</shortName>
    </alternativeName>
</protein>
<dbReference type="EC" id="2.7.11.1"/>
<dbReference type="EMBL" id="CR859603">
    <property type="protein sequence ID" value="CAH91766.1"/>
    <property type="molecule type" value="mRNA"/>
</dbReference>
<dbReference type="RefSeq" id="NP_001126024.1">
    <property type="nucleotide sequence ID" value="NM_001132552.1"/>
</dbReference>
<dbReference type="RefSeq" id="XP_009247955.1">
    <property type="nucleotide sequence ID" value="XM_009249680.1"/>
</dbReference>
<dbReference type="RefSeq" id="XP_009247956.1">
    <property type="nucleotide sequence ID" value="XM_009249681.1"/>
</dbReference>
<dbReference type="RefSeq" id="XP_009247957.1">
    <property type="nucleotide sequence ID" value="XM_009249682.1"/>
</dbReference>
<dbReference type="RefSeq" id="XP_009247958.1">
    <property type="nucleotide sequence ID" value="XM_009249683.1"/>
</dbReference>
<dbReference type="SMR" id="Q5R8Z4"/>
<dbReference type="FunCoup" id="Q5R8Z4">
    <property type="interactions" value="1286"/>
</dbReference>
<dbReference type="STRING" id="9601.ENSPPYP00000007186"/>
<dbReference type="Ensembl" id="ENSPPYT00000007485.2">
    <property type="protein sequence ID" value="ENSPPYP00000007186.1"/>
    <property type="gene ID" value="ENSPPYG00000006346.2"/>
</dbReference>
<dbReference type="GeneID" id="100172971"/>
<dbReference type="KEGG" id="pon:100172971"/>
<dbReference type="CTD" id="56924"/>
<dbReference type="eggNOG" id="KOG0578">
    <property type="taxonomic scope" value="Eukaryota"/>
</dbReference>
<dbReference type="GeneTree" id="ENSGT00940000156528"/>
<dbReference type="HOGENOM" id="CLU_000288_26_6_1"/>
<dbReference type="InParanoid" id="Q5R8Z4"/>
<dbReference type="OMA" id="ARRQTMW"/>
<dbReference type="OrthoDB" id="1022360at2759"/>
<dbReference type="TreeFam" id="TF105352"/>
<dbReference type="Proteomes" id="UP000001595">
    <property type="component" value="Chromosome 15"/>
</dbReference>
<dbReference type="GO" id="GO:0005737">
    <property type="term" value="C:cytoplasm"/>
    <property type="evidence" value="ECO:0007669"/>
    <property type="project" value="UniProtKB-SubCell"/>
</dbReference>
<dbReference type="GO" id="GO:0001650">
    <property type="term" value="C:fibrillar center"/>
    <property type="evidence" value="ECO:0007669"/>
    <property type="project" value="Ensembl"/>
</dbReference>
<dbReference type="GO" id="GO:0005654">
    <property type="term" value="C:nucleoplasm"/>
    <property type="evidence" value="ECO:0007669"/>
    <property type="project" value="Ensembl"/>
</dbReference>
<dbReference type="GO" id="GO:0014069">
    <property type="term" value="C:postsynaptic density"/>
    <property type="evidence" value="ECO:0007669"/>
    <property type="project" value="Ensembl"/>
</dbReference>
<dbReference type="GO" id="GO:0005524">
    <property type="term" value="F:ATP binding"/>
    <property type="evidence" value="ECO:0007669"/>
    <property type="project" value="UniProtKB-KW"/>
</dbReference>
<dbReference type="GO" id="GO:0106310">
    <property type="term" value="F:protein serine kinase activity"/>
    <property type="evidence" value="ECO:0007669"/>
    <property type="project" value="RHEA"/>
</dbReference>
<dbReference type="GO" id="GO:0004674">
    <property type="term" value="F:protein serine/threonine kinase activity"/>
    <property type="evidence" value="ECO:0007669"/>
    <property type="project" value="UniProtKB-KW"/>
</dbReference>
<dbReference type="GO" id="GO:0007612">
    <property type="term" value="P:learning"/>
    <property type="evidence" value="ECO:0007669"/>
    <property type="project" value="Ensembl"/>
</dbReference>
<dbReference type="GO" id="GO:0007626">
    <property type="term" value="P:locomotory behavior"/>
    <property type="evidence" value="ECO:0007669"/>
    <property type="project" value="Ensembl"/>
</dbReference>
<dbReference type="GO" id="GO:0007613">
    <property type="term" value="P:memory"/>
    <property type="evidence" value="ECO:0007669"/>
    <property type="project" value="Ensembl"/>
</dbReference>
<dbReference type="GO" id="GO:0140058">
    <property type="term" value="P:neuron projection arborization"/>
    <property type="evidence" value="ECO:0007669"/>
    <property type="project" value="Ensembl"/>
</dbReference>
<dbReference type="GO" id="GO:1990138">
    <property type="term" value="P:neuron projection extension"/>
    <property type="evidence" value="ECO:0007669"/>
    <property type="project" value="Ensembl"/>
</dbReference>
<dbReference type="CDD" id="cd01093">
    <property type="entry name" value="CRIB_PAK_like"/>
    <property type="match status" value="1"/>
</dbReference>
<dbReference type="CDD" id="cd06659">
    <property type="entry name" value="STKc_PAK6"/>
    <property type="match status" value="1"/>
</dbReference>
<dbReference type="FunFam" id="1.10.510.10:FF:000073">
    <property type="entry name" value="Non-specific serine/threonine protein kinase"/>
    <property type="match status" value="1"/>
</dbReference>
<dbReference type="FunFam" id="3.30.200.20:FF:000141">
    <property type="entry name" value="Non-specific serine/threonine protein kinase"/>
    <property type="match status" value="1"/>
</dbReference>
<dbReference type="FunFam" id="3.90.810.10:FF:000002">
    <property type="entry name" value="Non-specific serine/threonine protein kinase"/>
    <property type="match status" value="1"/>
</dbReference>
<dbReference type="Gene3D" id="3.90.810.10">
    <property type="entry name" value="CRIB domain"/>
    <property type="match status" value="1"/>
</dbReference>
<dbReference type="Gene3D" id="3.30.200.20">
    <property type="entry name" value="Phosphorylase Kinase, domain 1"/>
    <property type="match status" value="1"/>
</dbReference>
<dbReference type="Gene3D" id="1.10.510.10">
    <property type="entry name" value="Transferase(Phosphotransferase) domain 1"/>
    <property type="match status" value="1"/>
</dbReference>
<dbReference type="InterPro" id="IPR000095">
    <property type="entry name" value="CRIB_dom"/>
</dbReference>
<dbReference type="InterPro" id="IPR036936">
    <property type="entry name" value="CRIB_dom_sf"/>
</dbReference>
<dbReference type="InterPro" id="IPR011009">
    <property type="entry name" value="Kinase-like_dom_sf"/>
</dbReference>
<dbReference type="InterPro" id="IPR051931">
    <property type="entry name" value="PAK3-like"/>
</dbReference>
<dbReference type="InterPro" id="IPR033923">
    <property type="entry name" value="PAK_BD"/>
</dbReference>
<dbReference type="InterPro" id="IPR000719">
    <property type="entry name" value="Prot_kinase_dom"/>
</dbReference>
<dbReference type="InterPro" id="IPR017441">
    <property type="entry name" value="Protein_kinase_ATP_BS"/>
</dbReference>
<dbReference type="InterPro" id="IPR035066">
    <property type="entry name" value="STKc_PAK6"/>
</dbReference>
<dbReference type="PANTHER" id="PTHR45832:SF3">
    <property type="entry name" value="NON-SPECIFIC SERINE_THREONINE PROTEIN KINASE"/>
    <property type="match status" value="1"/>
</dbReference>
<dbReference type="PANTHER" id="PTHR45832">
    <property type="entry name" value="SERINE/THREONINE-PROTEIN KINASE SAMKA-RELATED-RELATED"/>
    <property type="match status" value="1"/>
</dbReference>
<dbReference type="Pfam" id="PF00786">
    <property type="entry name" value="PBD"/>
    <property type="match status" value="1"/>
</dbReference>
<dbReference type="Pfam" id="PF00069">
    <property type="entry name" value="Pkinase"/>
    <property type="match status" value="1"/>
</dbReference>
<dbReference type="SMART" id="SM00285">
    <property type="entry name" value="PBD"/>
    <property type="match status" value="1"/>
</dbReference>
<dbReference type="SUPFAM" id="SSF56112">
    <property type="entry name" value="Protein kinase-like (PK-like)"/>
    <property type="match status" value="1"/>
</dbReference>
<dbReference type="PROSITE" id="PS50108">
    <property type="entry name" value="CRIB"/>
    <property type="match status" value="1"/>
</dbReference>
<dbReference type="PROSITE" id="PS00107">
    <property type="entry name" value="PROTEIN_KINASE_ATP"/>
    <property type="match status" value="1"/>
</dbReference>
<dbReference type="PROSITE" id="PS50011">
    <property type="entry name" value="PROTEIN_KINASE_DOM"/>
    <property type="match status" value="1"/>
</dbReference>
<accession>Q5R8Z4</accession>
<evidence type="ECO:0000250" key="1"/>
<evidence type="ECO:0000255" key="2">
    <source>
        <dbReference type="PROSITE-ProRule" id="PRU00057"/>
    </source>
</evidence>
<evidence type="ECO:0000255" key="3">
    <source>
        <dbReference type="PROSITE-ProRule" id="PRU00159"/>
    </source>
</evidence>
<evidence type="ECO:0000256" key="4">
    <source>
        <dbReference type="SAM" id="MobiDB-lite"/>
    </source>
</evidence>
<evidence type="ECO:0000305" key="5"/>
<reference key="1">
    <citation type="submission" date="2004-11" db="EMBL/GenBank/DDBJ databases">
        <authorList>
            <consortium name="The German cDNA consortium"/>
        </authorList>
    </citation>
    <scope>NUCLEOTIDE SEQUENCE [LARGE SCALE MRNA]</scope>
    <source>
        <tissue>Brain cortex</tissue>
    </source>
</reference>
<proteinExistence type="evidence at transcript level"/>
<sequence length="681" mass="74950">MFRKKKKKRPEISAPQNFQHRVHTSFDPKEGKFVGLPPQWQNILDTLRRPKPVVDPSRITRVQLQPMKTVVRGSTMPMDGYISGLLNDIQKLSVISSNTLRGRSPTSRRRAQSLGLLGDEHWATDPDMYLQSPQSERTDPHGLYLSCNGGTPAGHKQMPWPEPQSPRVLPNGLAAKAQSLGPAEFQGASQRCLQLGACLQSSPPGASPPTGTNRRGMKAAKHGSEEARPQSCLVGSATGRPGGEGSPSPKTRESSLKRRLFRSMFLSTAATAPPSSSKPGPPPQSKPNSSFRPPQKDNPPSLVAKAQSLPSDQPVGTFSPLTTSDTSSPQKSLRTAPATGQLPGRSSPAGSPRTWHAQISTSNLYLPQDPTVAKGALAGEDTGVVTHEQFKAALRMVVDQGDPRLLLDSYVKIGEGSTGIVCLAREKHSGRQVAVKMMDLRKQQRRELLFNEVVIMRDYQHFNVVEMYKSYLVGEELWVLMEFLQGGALTDIVSQVRLNEEQIATVCEAVLQALAYLHAQGVIHRDIKSDSILLTLDGRVKLSDFGFCAQISKDVPKRKSLVGTPYWMAPEVISRSLYATEVDIWSLGIMVIEMVDGEPPYFSDSPVQAMKRLRDSPPPKLKNSHKVSPVLRDFLERMLVRDPQERATAQELLDHPFLLQTGLPECLVPLIQLYRKQTSTC</sequence>